<sequence>MSTTIDMPGSSKAAKAGKPVLVTTPSRPGGWKKGVAIMDFILRLGAIAAALGAAATMGLSDQTLPFFTQFFQFEASYDSFTTFQFFVITMALVAGYLVLSLPLSIVAVVRPHAAGPRLFLIILDTVFLTLATASGASAASIVYLAHNGNQDTNWIAICNQFGDFCAQTSGAVVSSLVAVLVFVLLIVMSALVLGKKH</sequence>
<feature type="chain" id="PRO_0000417776" description="Casparian strip membrane protein 5">
    <location>
        <begin position="1"/>
        <end position="197"/>
    </location>
</feature>
<feature type="topological domain" description="Cytoplasmic" evidence="2">
    <location>
        <begin position="1"/>
        <end position="34"/>
    </location>
</feature>
<feature type="transmembrane region" description="Helical" evidence="2">
    <location>
        <begin position="35"/>
        <end position="55"/>
    </location>
</feature>
<feature type="topological domain" description="Extracellular" evidence="2">
    <location>
        <begin position="56"/>
        <end position="84"/>
    </location>
</feature>
<feature type="transmembrane region" description="Helical" evidence="2">
    <location>
        <begin position="85"/>
        <end position="105"/>
    </location>
</feature>
<feature type="topological domain" description="Cytoplasmic" evidence="2">
    <location>
        <begin position="106"/>
        <end position="117"/>
    </location>
</feature>
<feature type="transmembrane region" description="Helical" evidence="2">
    <location>
        <begin position="118"/>
        <end position="138"/>
    </location>
</feature>
<feature type="topological domain" description="Extracellular" evidence="2">
    <location>
        <begin position="139"/>
        <end position="171"/>
    </location>
</feature>
<feature type="transmembrane region" description="Helical" evidence="2">
    <location>
        <begin position="172"/>
        <end position="192"/>
    </location>
</feature>
<feature type="topological domain" description="Cytoplasmic" evidence="2">
    <location>
        <begin position="193"/>
        <end position="197"/>
    </location>
</feature>
<protein>
    <recommendedName>
        <fullName>Casparian strip membrane protein 5</fullName>
        <shortName>LjCASP5</shortName>
    </recommendedName>
</protein>
<keyword id="KW-1003">Cell membrane</keyword>
<keyword id="KW-0961">Cell wall biogenesis/degradation</keyword>
<keyword id="KW-0472">Membrane</keyword>
<keyword id="KW-0812">Transmembrane</keyword>
<keyword id="KW-1133">Transmembrane helix</keyword>
<proteinExistence type="evidence at transcript level"/>
<comment type="function">
    <text evidence="1">Regulates membrane-cell wall junctions and localized cell wall deposition. Required for establishment of the Casparian strip membrane domain (CSD) and the subsequent formation of Casparian strips, a cell wall modification of the root endodermis that determines an apoplastic barrier between the intraorganismal apoplasm and the extraorganismal apoplasm and prevents lateral diffusion (By similarity).</text>
</comment>
<comment type="subunit">
    <text evidence="1">Homodimer and heterodimers.</text>
</comment>
<comment type="subcellular location">
    <subcellularLocation>
        <location evidence="1">Cell membrane</location>
        <topology evidence="1">Multi-pass membrane protein</topology>
    </subcellularLocation>
    <text evidence="1">Very restricted localization following a belt shape within the plasma membrane which coincides with the position of the Casparian strip membrane domain in the root endodermis.</text>
</comment>
<comment type="similarity">
    <text evidence="3">Belongs to the Casparian strip membrane proteins (CASP) family.</text>
</comment>
<reference key="1">
    <citation type="submission" date="2009-02" db="EMBL/GenBank/DDBJ databases">
        <title>Construction and analysis of normalized cDNA library from stressed or untreated underground tissues of Lotus japonicus.</title>
        <authorList>
            <person name="Chan A.P."/>
            <person name="Cheung F."/>
            <person name="Xiao Y."/>
            <person name="Town C.D."/>
        </authorList>
    </citation>
    <scope>NUCLEOTIDE SEQUENCE [LARGE SCALE MRNA]</scope>
    <source>
        <strain>cv. Gifu</strain>
        <tissue>Root</tissue>
    </source>
</reference>
<reference key="2">
    <citation type="submission" date="2012-05" db="EMBL/GenBank/DDBJ databases">
        <authorList>
            <person name="Krishnakumar V."/>
            <person name="Cheung F."/>
            <person name="Xiao Y."/>
            <person name="Chan A."/>
            <person name="Moskal W.A."/>
            <person name="Town C.D."/>
        </authorList>
    </citation>
    <scope>NUCLEOTIDE SEQUENCE [LARGE SCALE MRNA]</scope>
</reference>
<reference key="3">
    <citation type="journal article" date="2014" name="Plant Physiol.">
        <title>Functional and evolutionary analysis of the CASPARIAN STRIP MEMBRANE DOMAIN PROTEIN family.</title>
        <authorList>
            <person name="Roppolo D."/>
            <person name="Boeckmann B."/>
            <person name="Pfister A."/>
            <person name="Boutet E."/>
            <person name="Rubio M.C."/>
            <person name="Denervaud-Tendon V."/>
            <person name="Vermeer J.E."/>
            <person name="Gheyselinck J."/>
            <person name="Xenarios I."/>
            <person name="Geldner N."/>
        </authorList>
    </citation>
    <scope>GENE FAMILY</scope>
    <scope>NOMENCLATURE</scope>
</reference>
<name>CASP5_LOTJA</name>
<organism>
    <name type="scientific">Lotus japonicus</name>
    <name type="common">Lotus corniculatus var. japonicus</name>
    <dbReference type="NCBI Taxonomy" id="34305"/>
    <lineage>
        <taxon>Eukaryota</taxon>
        <taxon>Viridiplantae</taxon>
        <taxon>Streptophyta</taxon>
        <taxon>Embryophyta</taxon>
        <taxon>Tracheophyta</taxon>
        <taxon>Spermatophyta</taxon>
        <taxon>Magnoliopsida</taxon>
        <taxon>eudicotyledons</taxon>
        <taxon>Gunneridae</taxon>
        <taxon>Pentapetalae</taxon>
        <taxon>rosids</taxon>
        <taxon>fabids</taxon>
        <taxon>Fabales</taxon>
        <taxon>Fabaceae</taxon>
        <taxon>Papilionoideae</taxon>
        <taxon>50 kb inversion clade</taxon>
        <taxon>NPAAA clade</taxon>
        <taxon>Hologalegina</taxon>
        <taxon>robinioid clade</taxon>
        <taxon>Loteae</taxon>
        <taxon>Lotus</taxon>
    </lineage>
</organism>
<dbReference type="EMBL" id="GO010091">
    <property type="status" value="NOT_ANNOTATED_CDS"/>
    <property type="molecule type" value="mRNA"/>
</dbReference>
<dbReference type="EMBL" id="BT137727">
    <property type="protein sequence ID" value="AFK37522.1"/>
    <property type="molecule type" value="mRNA"/>
</dbReference>
<dbReference type="GO" id="GO:0005886">
    <property type="term" value="C:plasma membrane"/>
    <property type="evidence" value="ECO:0007669"/>
    <property type="project" value="UniProtKB-SubCell"/>
</dbReference>
<dbReference type="GO" id="GO:0071555">
    <property type="term" value="P:cell wall organization"/>
    <property type="evidence" value="ECO:0007669"/>
    <property type="project" value="UniProtKB-KW"/>
</dbReference>
<dbReference type="InterPro" id="IPR006459">
    <property type="entry name" value="CASP/CASPL"/>
</dbReference>
<dbReference type="InterPro" id="IPR006702">
    <property type="entry name" value="CASP_dom"/>
</dbReference>
<dbReference type="InterPro" id="IPR044173">
    <property type="entry name" value="CASPL"/>
</dbReference>
<dbReference type="NCBIfam" id="TIGR01569">
    <property type="entry name" value="A_tha_TIGR01569"/>
    <property type="match status" value="1"/>
</dbReference>
<dbReference type="PANTHER" id="PTHR36488:SF11">
    <property type="entry name" value="CASP-LIKE PROTEIN"/>
    <property type="match status" value="1"/>
</dbReference>
<dbReference type="PANTHER" id="PTHR36488">
    <property type="entry name" value="CASP-LIKE PROTEIN 1U1"/>
    <property type="match status" value="1"/>
</dbReference>
<dbReference type="Pfam" id="PF04535">
    <property type="entry name" value="CASP_dom"/>
    <property type="match status" value="1"/>
</dbReference>
<evidence type="ECO:0000250" key="1"/>
<evidence type="ECO:0000255" key="2"/>
<evidence type="ECO:0000305" key="3"/>
<accession>P0DI57</accession>
<accession>I3SB80</accession>